<protein>
    <recommendedName>
        <fullName evidence="1">DNA ligase</fullName>
        <ecNumber evidence="1">6.5.1.2</ecNumber>
    </recommendedName>
    <alternativeName>
        <fullName evidence="1">Polydeoxyribonucleotide synthase [NAD(+)]</fullName>
    </alternativeName>
</protein>
<proteinExistence type="inferred from homology"/>
<feature type="chain" id="PRO_0000313155" description="DNA ligase">
    <location>
        <begin position="1"/>
        <end position="719"/>
    </location>
</feature>
<feature type="domain" description="BRCT" evidence="1">
    <location>
        <begin position="640"/>
        <end position="719"/>
    </location>
</feature>
<feature type="active site" description="N6-AMP-lysine intermediate" evidence="1">
    <location>
        <position position="128"/>
    </location>
</feature>
<feature type="binding site" evidence="1">
    <location>
        <begin position="42"/>
        <end position="46"/>
    </location>
    <ligand>
        <name>NAD(+)</name>
        <dbReference type="ChEBI" id="CHEBI:57540"/>
    </ligand>
</feature>
<feature type="binding site" evidence="1">
    <location>
        <begin position="92"/>
        <end position="93"/>
    </location>
    <ligand>
        <name>NAD(+)</name>
        <dbReference type="ChEBI" id="CHEBI:57540"/>
    </ligand>
</feature>
<feature type="binding site" evidence="1">
    <location>
        <position position="126"/>
    </location>
    <ligand>
        <name>NAD(+)</name>
        <dbReference type="ChEBI" id="CHEBI:57540"/>
    </ligand>
</feature>
<feature type="binding site" evidence="1">
    <location>
        <position position="149"/>
    </location>
    <ligand>
        <name>NAD(+)</name>
        <dbReference type="ChEBI" id="CHEBI:57540"/>
    </ligand>
</feature>
<feature type="binding site" evidence="1">
    <location>
        <position position="185"/>
    </location>
    <ligand>
        <name>NAD(+)</name>
        <dbReference type="ChEBI" id="CHEBI:57540"/>
    </ligand>
</feature>
<feature type="binding site" evidence="1">
    <location>
        <position position="301"/>
    </location>
    <ligand>
        <name>NAD(+)</name>
        <dbReference type="ChEBI" id="CHEBI:57540"/>
    </ligand>
</feature>
<feature type="binding site" evidence="1">
    <location>
        <position position="325"/>
    </location>
    <ligand>
        <name>NAD(+)</name>
        <dbReference type="ChEBI" id="CHEBI:57540"/>
    </ligand>
</feature>
<feature type="binding site" evidence="1">
    <location>
        <position position="430"/>
    </location>
    <ligand>
        <name>Zn(2+)</name>
        <dbReference type="ChEBI" id="CHEBI:29105"/>
    </ligand>
</feature>
<feature type="binding site" evidence="1">
    <location>
        <position position="433"/>
    </location>
    <ligand>
        <name>Zn(2+)</name>
        <dbReference type="ChEBI" id="CHEBI:29105"/>
    </ligand>
</feature>
<feature type="binding site" evidence="1">
    <location>
        <position position="448"/>
    </location>
    <ligand>
        <name>Zn(2+)</name>
        <dbReference type="ChEBI" id="CHEBI:29105"/>
    </ligand>
</feature>
<feature type="binding site" evidence="1">
    <location>
        <position position="454"/>
    </location>
    <ligand>
        <name>Zn(2+)</name>
        <dbReference type="ChEBI" id="CHEBI:29105"/>
    </ligand>
</feature>
<accession>A5VRG5</accession>
<reference key="1">
    <citation type="journal article" date="2009" name="PLoS ONE">
        <title>Genome degradation in Brucella ovis corresponds with narrowing of its host range and tissue tropism.</title>
        <authorList>
            <person name="Tsolis R.M."/>
            <person name="Seshadri R."/>
            <person name="Santos R.L."/>
            <person name="Sangari F.J."/>
            <person name="Lobo J.M."/>
            <person name="de Jong M.F."/>
            <person name="Ren Q."/>
            <person name="Myers G."/>
            <person name="Brinkac L.M."/>
            <person name="Nelson W.C."/>
            <person name="Deboy R.T."/>
            <person name="Angiuoli S."/>
            <person name="Khouri H."/>
            <person name="Dimitrov G."/>
            <person name="Robinson J.R."/>
            <person name="Mulligan S."/>
            <person name="Walker R.L."/>
            <person name="Elzer P.E."/>
            <person name="Hassan K.A."/>
            <person name="Paulsen I.T."/>
        </authorList>
    </citation>
    <scope>NUCLEOTIDE SEQUENCE [LARGE SCALE GENOMIC DNA]</scope>
    <source>
        <strain>ATCC 25840 / 63/290 / NCTC 10512</strain>
    </source>
</reference>
<keyword id="KW-0227">DNA damage</keyword>
<keyword id="KW-0234">DNA repair</keyword>
<keyword id="KW-0235">DNA replication</keyword>
<keyword id="KW-0436">Ligase</keyword>
<keyword id="KW-0460">Magnesium</keyword>
<keyword id="KW-0464">Manganese</keyword>
<keyword id="KW-0479">Metal-binding</keyword>
<keyword id="KW-0520">NAD</keyword>
<keyword id="KW-0862">Zinc</keyword>
<name>DNLJ_BRUO2</name>
<gene>
    <name evidence="1" type="primary">ligA</name>
    <name type="ordered locus">BOV_1376</name>
</gene>
<evidence type="ECO:0000255" key="1">
    <source>
        <dbReference type="HAMAP-Rule" id="MF_01588"/>
    </source>
</evidence>
<organism>
    <name type="scientific">Brucella ovis (strain ATCC 25840 / 63/290 / NCTC 10512)</name>
    <dbReference type="NCBI Taxonomy" id="444178"/>
    <lineage>
        <taxon>Bacteria</taxon>
        <taxon>Pseudomonadati</taxon>
        <taxon>Pseudomonadota</taxon>
        <taxon>Alphaproteobacteria</taxon>
        <taxon>Hyphomicrobiales</taxon>
        <taxon>Brucellaceae</taxon>
        <taxon>Brucella/Ochrobactrum group</taxon>
        <taxon>Brucella</taxon>
    </lineage>
</organism>
<sequence>MSDISVEKLTELEAAAELERLARAIAHHDELYHAKDRPEISDAAYDALKRRNEAIEAHFPALVRDDSPSRRVGAAPALATFAPVVHARPMLSLDNAFSDEDVRDFVGSVYRFLGQLPDDSIAFTAEPKIDGLSMSIRYENGILVSGATRGDGTTGENVTANIRTIAEIPNRLPAGAPAVVEVRGEVYMAKSDFLTLNAQMEAEGKQTYVNPRNTAAGSLRQLDAKVTASRKLRFFAYAWGEMSDMPVDTQLGMVEVFRQWGFPVNPLMKRFNSVDGLLAHYRAIGMERPTLDYDIDGVVYKVDRLDLQTRLGFRSRSPRWAIAHKFPAEQALTILRGIDIQVGRTGALTPVARLEPITVGGVVVTNATLHNEDYIKGIGQKGEPIREGRDIRIGDSVIVQRAGDVIPQIVDVVLEEGKKRGEPYQFPHVCPACGSHAVREEGEAVRRCTGGLICPAQAVERIRHFVSRNAFDIEGLGEKQVEFFFNAEDPALCIRSPADIFTLKKRQENSLTKLQNIEGFGATSVKKLYDAIDARREIALHRFLFGLGIRHVGEVNAKRLARAYLSYAAFEKAALEAVPPKEGDRTDKGSEAWQDMLAVEGIGSIVAEAVVDFYGEPHNREVLAALLAEVTPLDEEARVATGSPVEGKTVVFTGSLERMSRDEAKAMAERHGAKTAGSVSKKTDLVVAGPGAGSKLAKATELGIEVINEDDWFKLVGED</sequence>
<comment type="function">
    <text evidence="1">DNA ligase that catalyzes the formation of phosphodiester linkages between 5'-phosphoryl and 3'-hydroxyl groups in double-stranded DNA using NAD as a coenzyme and as the energy source for the reaction. It is essential for DNA replication and repair of damaged DNA.</text>
</comment>
<comment type="catalytic activity">
    <reaction evidence="1">
        <text>NAD(+) + (deoxyribonucleotide)n-3'-hydroxyl + 5'-phospho-(deoxyribonucleotide)m = (deoxyribonucleotide)n+m + AMP + beta-nicotinamide D-nucleotide.</text>
        <dbReference type="EC" id="6.5.1.2"/>
    </reaction>
</comment>
<comment type="cofactor">
    <cofactor evidence="1">
        <name>Mg(2+)</name>
        <dbReference type="ChEBI" id="CHEBI:18420"/>
    </cofactor>
    <cofactor evidence="1">
        <name>Mn(2+)</name>
        <dbReference type="ChEBI" id="CHEBI:29035"/>
    </cofactor>
</comment>
<comment type="similarity">
    <text evidence="1">Belongs to the NAD-dependent DNA ligase family. LigA subfamily.</text>
</comment>
<dbReference type="EC" id="6.5.1.2" evidence="1"/>
<dbReference type="EMBL" id="CP000708">
    <property type="protein sequence ID" value="ABQ61892.1"/>
    <property type="molecule type" value="Genomic_DNA"/>
</dbReference>
<dbReference type="RefSeq" id="WP_006013149.1">
    <property type="nucleotide sequence ID" value="NC_009505.1"/>
</dbReference>
<dbReference type="SMR" id="A5VRG5"/>
<dbReference type="GeneID" id="45124764"/>
<dbReference type="KEGG" id="bov:BOV_1376"/>
<dbReference type="HOGENOM" id="CLU_007764_2_0_5"/>
<dbReference type="PhylomeDB" id="A5VRG5"/>
<dbReference type="Proteomes" id="UP000006383">
    <property type="component" value="Chromosome I"/>
</dbReference>
<dbReference type="GO" id="GO:0005829">
    <property type="term" value="C:cytosol"/>
    <property type="evidence" value="ECO:0007669"/>
    <property type="project" value="TreeGrafter"/>
</dbReference>
<dbReference type="GO" id="GO:0003911">
    <property type="term" value="F:DNA ligase (NAD+) activity"/>
    <property type="evidence" value="ECO:0007669"/>
    <property type="project" value="UniProtKB-UniRule"/>
</dbReference>
<dbReference type="GO" id="GO:0046872">
    <property type="term" value="F:metal ion binding"/>
    <property type="evidence" value="ECO:0007669"/>
    <property type="project" value="UniProtKB-KW"/>
</dbReference>
<dbReference type="GO" id="GO:0006281">
    <property type="term" value="P:DNA repair"/>
    <property type="evidence" value="ECO:0007669"/>
    <property type="project" value="UniProtKB-KW"/>
</dbReference>
<dbReference type="GO" id="GO:0006260">
    <property type="term" value="P:DNA replication"/>
    <property type="evidence" value="ECO:0007669"/>
    <property type="project" value="UniProtKB-KW"/>
</dbReference>
<dbReference type="CDD" id="cd17748">
    <property type="entry name" value="BRCT_DNA_ligase_like"/>
    <property type="match status" value="1"/>
</dbReference>
<dbReference type="CDD" id="cd00114">
    <property type="entry name" value="LIGANc"/>
    <property type="match status" value="1"/>
</dbReference>
<dbReference type="FunFam" id="3.30.470.30:FF:000001">
    <property type="entry name" value="DNA ligase"/>
    <property type="match status" value="1"/>
</dbReference>
<dbReference type="Gene3D" id="6.20.10.30">
    <property type="match status" value="1"/>
</dbReference>
<dbReference type="Gene3D" id="1.10.150.20">
    <property type="entry name" value="5' to 3' exonuclease, C-terminal subdomain"/>
    <property type="match status" value="2"/>
</dbReference>
<dbReference type="Gene3D" id="3.40.50.10190">
    <property type="entry name" value="BRCT domain"/>
    <property type="match status" value="1"/>
</dbReference>
<dbReference type="Gene3D" id="3.30.470.30">
    <property type="entry name" value="DNA ligase/mRNA capping enzyme"/>
    <property type="match status" value="1"/>
</dbReference>
<dbReference type="Gene3D" id="1.10.287.610">
    <property type="entry name" value="Helix hairpin bin"/>
    <property type="match status" value="1"/>
</dbReference>
<dbReference type="Gene3D" id="2.40.50.140">
    <property type="entry name" value="Nucleic acid-binding proteins"/>
    <property type="match status" value="1"/>
</dbReference>
<dbReference type="HAMAP" id="MF_01588">
    <property type="entry name" value="DNA_ligase_A"/>
    <property type="match status" value="1"/>
</dbReference>
<dbReference type="InterPro" id="IPR001357">
    <property type="entry name" value="BRCT_dom"/>
</dbReference>
<dbReference type="InterPro" id="IPR036420">
    <property type="entry name" value="BRCT_dom_sf"/>
</dbReference>
<dbReference type="InterPro" id="IPR041663">
    <property type="entry name" value="DisA/LigA_HHH"/>
</dbReference>
<dbReference type="InterPro" id="IPR001679">
    <property type="entry name" value="DNA_ligase"/>
</dbReference>
<dbReference type="InterPro" id="IPR018239">
    <property type="entry name" value="DNA_ligase_AS"/>
</dbReference>
<dbReference type="InterPro" id="IPR033136">
    <property type="entry name" value="DNA_ligase_CS"/>
</dbReference>
<dbReference type="InterPro" id="IPR013839">
    <property type="entry name" value="DNAligase_adenylation"/>
</dbReference>
<dbReference type="InterPro" id="IPR013840">
    <property type="entry name" value="DNAligase_N"/>
</dbReference>
<dbReference type="InterPro" id="IPR012340">
    <property type="entry name" value="NA-bd_OB-fold"/>
</dbReference>
<dbReference type="InterPro" id="IPR004150">
    <property type="entry name" value="NAD_DNA_ligase_OB"/>
</dbReference>
<dbReference type="InterPro" id="IPR010994">
    <property type="entry name" value="RuvA_2-like"/>
</dbReference>
<dbReference type="InterPro" id="IPR004149">
    <property type="entry name" value="Znf_DNAligase_C4"/>
</dbReference>
<dbReference type="NCBIfam" id="TIGR00575">
    <property type="entry name" value="dnlj"/>
    <property type="match status" value="1"/>
</dbReference>
<dbReference type="NCBIfam" id="NF005932">
    <property type="entry name" value="PRK07956.1"/>
    <property type="match status" value="1"/>
</dbReference>
<dbReference type="PANTHER" id="PTHR23389">
    <property type="entry name" value="CHROMOSOME TRANSMISSION FIDELITY FACTOR 18"/>
    <property type="match status" value="1"/>
</dbReference>
<dbReference type="PANTHER" id="PTHR23389:SF9">
    <property type="entry name" value="DNA LIGASE"/>
    <property type="match status" value="1"/>
</dbReference>
<dbReference type="Pfam" id="PF00533">
    <property type="entry name" value="BRCT"/>
    <property type="match status" value="1"/>
</dbReference>
<dbReference type="Pfam" id="PF01653">
    <property type="entry name" value="DNA_ligase_aden"/>
    <property type="match status" value="1"/>
</dbReference>
<dbReference type="Pfam" id="PF03120">
    <property type="entry name" value="DNA_ligase_OB"/>
    <property type="match status" value="1"/>
</dbReference>
<dbReference type="Pfam" id="PF03119">
    <property type="entry name" value="DNA_ligase_ZBD"/>
    <property type="match status" value="1"/>
</dbReference>
<dbReference type="Pfam" id="PF12826">
    <property type="entry name" value="HHH_2"/>
    <property type="match status" value="1"/>
</dbReference>
<dbReference type="PIRSF" id="PIRSF001604">
    <property type="entry name" value="LigA"/>
    <property type="match status" value="1"/>
</dbReference>
<dbReference type="SMART" id="SM00292">
    <property type="entry name" value="BRCT"/>
    <property type="match status" value="1"/>
</dbReference>
<dbReference type="SMART" id="SM00532">
    <property type="entry name" value="LIGANc"/>
    <property type="match status" value="1"/>
</dbReference>
<dbReference type="SUPFAM" id="SSF52113">
    <property type="entry name" value="BRCT domain"/>
    <property type="match status" value="1"/>
</dbReference>
<dbReference type="SUPFAM" id="SSF56091">
    <property type="entry name" value="DNA ligase/mRNA capping enzyme, catalytic domain"/>
    <property type="match status" value="1"/>
</dbReference>
<dbReference type="SUPFAM" id="SSF50249">
    <property type="entry name" value="Nucleic acid-binding proteins"/>
    <property type="match status" value="1"/>
</dbReference>
<dbReference type="SUPFAM" id="SSF47781">
    <property type="entry name" value="RuvA domain 2-like"/>
    <property type="match status" value="1"/>
</dbReference>
<dbReference type="PROSITE" id="PS50172">
    <property type="entry name" value="BRCT"/>
    <property type="match status" value="1"/>
</dbReference>
<dbReference type="PROSITE" id="PS01055">
    <property type="entry name" value="DNA_LIGASE_N1"/>
    <property type="match status" value="1"/>
</dbReference>
<dbReference type="PROSITE" id="PS01056">
    <property type="entry name" value="DNA_LIGASE_N2"/>
    <property type="match status" value="1"/>
</dbReference>